<dbReference type="EC" id="1.14.13.63" evidence="2 3"/>
<dbReference type="EMBL" id="DQ217596">
    <property type="protein sequence ID" value="ABB20530.1"/>
    <property type="molecule type" value="Genomic_DNA"/>
</dbReference>
<dbReference type="SMR" id="Q078T0"/>
<dbReference type="BRENDA" id="1.14.13.63">
    <property type="organism ID" value="517"/>
</dbReference>
<dbReference type="UniPathway" id="UPA00930"/>
<dbReference type="GO" id="GO:0047094">
    <property type="term" value="F:3-hydroxyphenylacetate 6-hydroxylase activity"/>
    <property type="evidence" value="ECO:0000315"/>
    <property type="project" value="AspGD"/>
</dbReference>
<dbReference type="GO" id="GO:0020037">
    <property type="term" value="F:heme binding"/>
    <property type="evidence" value="ECO:0007669"/>
    <property type="project" value="InterPro"/>
</dbReference>
<dbReference type="GO" id="GO:0005506">
    <property type="term" value="F:iron ion binding"/>
    <property type="evidence" value="ECO:0007669"/>
    <property type="project" value="InterPro"/>
</dbReference>
<dbReference type="GO" id="GO:0010124">
    <property type="term" value="P:phenylacetate catabolic process"/>
    <property type="evidence" value="ECO:0007669"/>
    <property type="project" value="UniProtKB-UniPathway"/>
</dbReference>
<dbReference type="CDD" id="cd11066">
    <property type="entry name" value="CYP_PhacA-like"/>
    <property type="match status" value="1"/>
</dbReference>
<dbReference type="FunFam" id="1.10.630.10:FF:000072">
    <property type="entry name" value="3-hydroxyphenylacetate 6 hydroxylase"/>
    <property type="match status" value="1"/>
</dbReference>
<dbReference type="Gene3D" id="1.10.630.10">
    <property type="entry name" value="Cytochrome P450"/>
    <property type="match status" value="1"/>
</dbReference>
<dbReference type="InterPro" id="IPR001128">
    <property type="entry name" value="Cyt_P450"/>
</dbReference>
<dbReference type="InterPro" id="IPR002401">
    <property type="entry name" value="Cyt_P450_E_grp-I"/>
</dbReference>
<dbReference type="InterPro" id="IPR036396">
    <property type="entry name" value="Cyt_P450_sf"/>
</dbReference>
<dbReference type="InterPro" id="IPR050364">
    <property type="entry name" value="Cytochrome_P450_fung"/>
</dbReference>
<dbReference type="PANTHER" id="PTHR46300">
    <property type="entry name" value="P450, PUTATIVE (EUROFUNG)-RELATED-RELATED"/>
    <property type="match status" value="1"/>
</dbReference>
<dbReference type="PANTHER" id="PTHR46300:SF9">
    <property type="entry name" value="P450, PUTATIVE-RELATED"/>
    <property type="match status" value="1"/>
</dbReference>
<dbReference type="Pfam" id="PF00067">
    <property type="entry name" value="p450"/>
    <property type="match status" value="1"/>
</dbReference>
<dbReference type="PRINTS" id="PR00463">
    <property type="entry name" value="EP450I"/>
</dbReference>
<dbReference type="PRINTS" id="PR00385">
    <property type="entry name" value="P450"/>
</dbReference>
<dbReference type="SUPFAM" id="SSF48264">
    <property type="entry name" value="Cytochrome P450"/>
    <property type="match status" value="1"/>
</dbReference>
<gene>
    <name type="primary">phacB</name>
    <name type="synonym">pshA</name>
</gene>
<name>PHACB_EMEND</name>
<comment type="function">
    <text evidence="3">Catalyzes the hydroxylation of 3-hydroxyphenylacetate and 3,4-dihydroxyphenylacetate to 2,5-dihydroxyphenylacetate (homogentisate) and 2,4,5-trihydroxyphenylacetate, respectively. Both of these compounds are used as substrate by homogentisate dioxygenase in the homogentisate pathway. The homogentisate pathway is used to catabolize phenylacetate and use it as a carbon source. Can also catalyze the hydroxylation of phenylacetate to 2-hydroxyphenylacetate at low efficiency to compensate for loss of phacA.</text>
</comment>
<comment type="catalytic activity">
    <reaction evidence="2 3">
        <text>3-hydroxyphenylacetate + NADH + O2 + H(+) = homogentisate + NAD(+) + H2O</text>
        <dbReference type="Rhea" id="RHEA:22208"/>
        <dbReference type="ChEBI" id="CHEBI:15377"/>
        <dbReference type="ChEBI" id="CHEBI:15378"/>
        <dbReference type="ChEBI" id="CHEBI:15379"/>
        <dbReference type="ChEBI" id="CHEBI:16169"/>
        <dbReference type="ChEBI" id="CHEBI:57540"/>
        <dbReference type="ChEBI" id="CHEBI:57945"/>
        <dbReference type="ChEBI" id="CHEBI:58149"/>
        <dbReference type="EC" id="1.14.13.63"/>
    </reaction>
</comment>
<comment type="catalytic activity">
    <reaction evidence="2 3">
        <text>3-hydroxyphenylacetate + NADPH + O2 + H(+) = homogentisate + NADP(+) + H2O</text>
        <dbReference type="Rhea" id="RHEA:22204"/>
        <dbReference type="ChEBI" id="CHEBI:15377"/>
        <dbReference type="ChEBI" id="CHEBI:15378"/>
        <dbReference type="ChEBI" id="CHEBI:15379"/>
        <dbReference type="ChEBI" id="CHEBI:16169"/>
        <dbReference type="ChEBI" id="CHEBI:57783"/>
        <dbReference type="ChEBI" id="CHEBI:58149"/>
        <dbReference type="ChEBI" id="CHEBI:58349"/>
        <dbReference type="EC" id="1.14.13.63"/>
    </reaction>
</comment>
<comment type="catalytic activity">
    <reaction evidence="2 3">
        <text>3,4-dihydroxyphenylacetate + NADH + O2 + H(+) = 2,4,5-trihydroxyphenylacetate + NAD(+) + H2O</text>
        <dbReference type="Rhea" id="RHEA:54088"/>
        <dbReference type="ChEBI" id="CHEBI:15377"/>
        <dbReference type="ChEBI" id="CHEBI:15378"/>
        <dbReference type="ChEBI" id="CHEBI:15379"/>
        <dbReference type="ChEBI" id="CHEBI:17612"/>
        <dbReference type="ChEBI" id="CHEBI:57540"/>
        <dbReference type="ChEBI" id="CHEBI:57945"/>
        <dbReference type="ChEBI" id="CHEBI:138056"/>
    </reaction>
</comment>
<comment type="catalytic activity">
    <reaction evidence="2 3">
        <text>3,4-dihydroxyphenylacetate + NADPH + O2 + H(+) = 2,4,5-trihydroxyphenylacetate + NADP(+) + H2O</text>
        <dbReference type="Rhea" id="RHEA:54092"/>
        <dbReference type="ChEBI" id="CHEBI:15377"/>
        <dbReference type="ChEBI" id="CHEBI:15378"/>
        <dbReference type="ChEBI" id="CHEBI:15379"/>
        <dbReference type="ChEBI" id="CHEBI:17612"/>
        <dbReference type="ChEBI" id="CHEBI:57783"/>
        <dbReference type="ChEBI" id="CHEBI:58349"/>
        <dbReference type="ChEBI" id="CHEBI:138056"/>
    </reaction>
</comment>
<comment type="pathway">
    <text>Aromatic compound metabolism; phenylacetate degradation.</text>
</comment>
<comment type="induction">
    <text evidence="2 3">Induced by phenylacetate and all its monohydroxy- and dihydroxy-derivatives. Induced by phenylalanine and tyrosine.</text>
</comment>
<comment type="similarity">
    <text evidence="4">Belongs to the cytochrome P450 family.</text>
</comment>
<reference key="1">
    <citation type="journal article" date="2007" name="Eukaryot. Cell">
        <title>Novel phacB-encoded cytochrome P450 monooxygenase from Aspergillus nidulans with 3-hydroxyphenylacetate 6-hydroxylase and 3,4-dihydroxyphenylacetate 6-hydroxylase activities.</title>
        <authorList>
            <person name="Ferrer-Sevillano F."/>
            <person name="Fernandez-Canon J.M."/>
        </authorList>
    </citation>
    <scope>NUCLEOTIDE SEQUENCE [GENOMIC DNA]</scope>
    <scope>CATALYTIC ACTIVITY</scope>
    <scope>FUNCTION</scope>
    <scope>INDUCTION</scope>
    <source>
        <strain>biA1</strain>
    </source>
</reference>
<reference key="2">
    <citation type="journal article" date="1999" name="J. Biol. Chem.">
        <title>Disruption of phacA, an Aspergillus nidulans gene encoding a novel cytochrome P450 monooxygenase catalyzing phenylacetate 2-hydroxylation, results in penicillin overproduction.</title>
        <authorList>
            <person name="Mingot J.M."/>
            <person name="Penalva M.A."/>
            <person name="Fernandez-Canon J.M."/>
        </authorList>
    </citation>
    <scope>CATALYTIC ACTIVITY</scope>
    <scope>INDUCTION</scope>
    <source>
        <strain>biA1</strain>
    </source>
</reference>
<sequence length="517" mass="58096">MAIAEALLFVNNRAVEHPLQFLTAVAFAVPLLYVVINEFIRASARIPGFKGPRGLPLIGNLAQIRKDAAEQYRIWSKIYGPVYQIQLGNIPVLVVNSAAAAKVLFGQNAQALSSRPEFYTFHKIVSNTAGTTIGTSPYSESLKRRRKGAASALNRPSVESYVHHLDVESKAFVAELFKYGNGGKTPVDPMAMIQRLSLSLALTLNWGVRVASQEEELFDEITEVEDKISKFRSTTGNLQDYIPILRLNPFSSNSHKAKEMRDRRDKYLSSLNRDLDDRMEKGTHKPCIQANVILDKEAKLNSEELTSISLTMLSGGLDTVTTLVAWSISLLAQRPDIQDKAAKAIQEMYSEGQPLCDPADDQKCAYVAALVRECLRYYTVLRLALPRTSIRDITYDGKVIPKGTVFFLNAWACNMDPEVWSDPDEFRPERWFEQPDAPMFTYGMGYRMCAGSLLANRELYLVFIRTLNSFRIEPTEEKIEWHPLKGNSDPTSLVAIPKKYKVRFVPKNEVSLVEALS</sequence>
<organism>
    <name type="scientific">Emericella nidulans</name>
    <name type="common">Aspergillus nidulans</name>
    <dbReference type="NCBI Taxonomy" id="162425"/>
    <lineage>
        <taxon>Eukaryota</taxon>
        <taxon>Fungi</taxon>
        <taxon>Dikarya</taxon>
        <taxon>Ascomycota</taxon>
        <taxon>Pezizomycotina</taxon>
        <taxon>Eurotiomycetes</taxon>
        <taxon>Eurotiomycetidae</taxon>
        <taxon>Eurotiales</taxon>
        <taxon>Aspergillaceae</taxon>
        <taxon>Aspergillus</taxon>
        <taxon>Aspergillus subgen. Nidulantes</taxon>
    </lineage>
</organism>
<accession>Q078T0</accession>
<feature type="chain" id="PRO_0000418445" description="3-hydroxyphenylacetate 6-hydroxylase">
    <location>
        <begin position="1"/>
        <end position="517"/>
    </location>
</feature>
<feature type="binding site" description="axial binding residue" evidence="1">
    <location>
        <position position="449"/>
    </location>
    <ligand>
        <name>heme</name>
        <dbReference type="ChEBI" id="CHEBI:30413"/>
    </ligand>
    <ligandPart>
        <name>Fe</name>
        <dbReference type="ChEBI" id="CHEBI:18248"/>
    </ligandPart>
</feature>
<keyword id="KW-0349">Heme</keyword>
<keyword id="KW-0408">Iron</keyword>
<keyword id="KW-0479">Metal-binding</keyword>
<keyword id="KW-0503">Monooxygenase</keyword>
<keyword id="KW-0520">NAD</keyword>
<keyword id="KW-0560">Oxidoreductase</keyword>
<evidence type="ECO:0000250" key="1"/>
<evidence type="ECO:0000269" key="2">
    <source>
    </source>
</evidence>
<evidence type="ECO:0000269" key="3">
    <source>
    </source>
</evidence>
<evidence type="ECO:0000305" key="4"/>
<protein>
    <recommendedName>
        <fullName>3-hydroxyphenylacetate 6-hydroxylase</fullName>
        <ecNumber evidence="2 3">1.14.13.63</ecNumber>
    </recommendedName>
</protein>
<proteinExistence type="evidence at protein level"/>